<reference key="1">
    <citation type="journal article" date="2009" name="Environ. Microbiol.">
        <title>Contribution of mobile genetic elements to Desulfovibrio vulgaris genome plasticity.</title>
        <authorList>
            <person name="Walker C.B."/>
            <person name="Stolyar S."/>
            <person name="Chivian D."/>
            <person name="Pinel N."/>
            <person name="Gabster J.A."/>
            <person name="Dehal P.S."/>
            <person name="He Z."/>
            <person name="Yang Z.K."/>
            <person name="Yen H.C."/>
            <person name="Zhou J."/>
            <person name="Wall J.D."/>
            <person name="Hazen T.C."/>
            <person name="Arkin A.P."/>
            <person name="Stahl D.A."/>
        </authorList>
    </citation>
    <scope>NUCLEOTIDE SEQUENCE [LARGE SCALE GENOMIC DNA]</scope>
    <source>
        <strain>DP4</strain>
    </source>
</reference>
<gene>
    <name evidence="1" type="primary">murG</name>
    <name type="ordered locus">Dvul_0741</name>
</gene>
<comment type="function">
    <text evidence="1">Cell wall formation. Catalyzes the transfer of a GlcNAc subunit on undecaprenyl-pyrophosphoryl-MurNAc-pentapeptide (lipid intermediate I) to form undecaprenyl-pyrophosphoryl-MurNAc-(pentapeptide)GlcNAc (lipid intermediate II).</text>
</comment>
<comment type="catalytic activity">
    <reaction evidence="1">
        <text>di-trans,octa-cis-undecaprenyl diphospho-N-acetyl-alpha-D-muramoyl-L-alanyl-D-glutamyl-meso-2,6-diaminopimeloyl-D-alanyl-D-alanine + UDP-N-acetyl-alpha-D-glucosamine = di-trans,octa-cis-undecaprenyl diphospho-[N-acetyl-alpha-D-glucosaminyl-(1-&gt;4)]-N-acetyl-alpha-D-muramoyl-L-alanyl-D-glutamyl-meso-2,6-diaminopimeloyl-D-alanyl-D-alanine + UDP + H(+)</text>
        <dbReference type="Rhea" id="RHEA:31227"/>
        <dbReference type="ChEBI" id="CHEBI:15378"/>
        <dbReference type="ChEBI" id="CHEBI:57705"/>
        <dbReference type="ChEBI" id="CHEBI:58223"/>
        <dbReference type="ChEBI" id="CHEBI:61387"/>
        <dbReference type="ChEBI" id="CHEBI:61388"/>
        <dbReference type="EC" id="2.4.1.227"/>
    </reaction>
</comment>
<comment type="pathway">
    <text evidence="1">Cell wall biogenesis; peptidoglycan biosynthesis.</text>
</comment>
<comment type="subcellular location">
    <subcellularLocation>
        <location evidence="1">Cell inner membrane</location>
        <topology evidence="1">Peripheral membrane protein</topology>
        <orientation evidence="1">Cytoplasmic side</orientation>
    </subcellularLocation>
</comment>
<comment type="similarity">
    <text evidence="1">Belongs to the glycosyltransferase 28 family. MurG subfamily.</text>
</comment>
<accession>A1VBE8</accession>
<feature type="chain" id="PRO_1000002640" description="UDP-N-acetylglucosamine--N-acetylmuramyl-(pentapeptide) pyrophosphoryl-undecaprenol N-acetylglucosamine transferase">
    <location>
        <begin position="1"/>
        <end position="365"/>
    </location>
</feature>
<feature type="binding site" evidence="1">
    <location>
        <begin position="11"/>
        <end position="13"/>
    </location>
    <ligand>
        <name>UDP-N-acetyl-alpha-D-glucosamine</name>
        <dbReference type="ChEBI" id="CHEBI:57705"/>
    </ligand>
</feature>
<feature type="binding site" evidence="1">
    <location>
        <position position="124"/>
    </location>
    <ligand>
        <name>UDP-N-acetyl-alpha-D-glucosamine</name>
        <dbReference type="ChEBI" id="CHEBI:57705"/>
    </ligand>
</feature>
<feature type="binding site" evidence="1">
    <location>
        <position position="165"/>
    </location>
    <ligand>
        <name>UDP-N-acetyl-alpha-D-glucosamine</name>
        <dbReference type="ChEBI" id="CHEBI:57705"/>
    </ligand>
</feature>
<feature type="binding site" evidence="1">
    <location>
        <position position="192"/>
    </location>
    <ligand>
        <name>UDP-N-acetyl-alpha-D-glucosamine</name>
        <dbReference type="ChEBI" id="CHEBI:57705"/>
    </ligand>
</feature>
<feature type="binding site" evidence="1">
    <location>
        <position position="246"/>
    </location>
    <ligand>
        <name>UDP-N-acetyl-alpha-D-glucosamine</name>
        <dbReference type="ChEBI" id="CHEBI:57705"/>
    </ligand>
</feature>
<feature type="binding site" evidence="1">
    <location>
        <position position="291"/>
    </location>
    <ligand>
        <name>UDP-N-acetyl-alpha-D-glucosamine</name>
        <dbReference type="ChEBI" id="CHEBI:57705"/>
    </ligand>
</feature>
<sequence length="365" mass="38283">MRRVILTTGGTGGHIFPALAVAEEIRARYPECSVLFMGGLYGPEADLAARAGLDFVGLPVRGVLGRGVRAIGAAFGMAAGIARAYAVMGRFDPDIVLGFGGYAAFAGVLAARLRGRPAAIHEQNSVPGVTNRVLSRVVPRVFLSLPDTLGAFPPQKTCLAGNPVRASIVACGAERSDPRPDHVRRLLVMGGSLGARAINDAVVSSLPALAEAGVEVWHQTGAADWERIRKAYAETGHGEGRVEAFIDDVASAYAWADLVLCRAGATSVAELAVAGKPAVLVPYPFATHDHQTHNARWLVSRGAAVLLEQKDISMTDVPALLVGLLSDRARLNRMAVSARAQGRPDAAAAVVDGLVELLKTTPRAR</sequence>
<protein>
    <recommendedName>
        <fullName evidence="1">UDP-N-acetylglucosamine--N-acetylmuramyl-(pentapeptide) pyrophosphoryl-undecaprenol N-acetylglucosamine transferase</fullName>
        <ecNumber evidence="1">2.4.1.227</ecNumber>
    </recommendedName>
    <alternativeName>
        <fullName evidence="1">Undecaprenyl-PP-MurNAc-pentapeptide-UDPGlcNAc GlcNAc transferase</fullName>
    </alternativeName>
</protein>
<dbReference type="EC" id="2.4.1.227" evidence="1"/>
<dbReference type="EMBL" id="CP000527">
    <property type="protein sequence ID" value="ABM27764.1"/>
    <property type="molecule type" value="Genomic_DNA"/>
</dbReference>
<dbReference type="RefSeq" id="WP_011791804.1">
    <property type="nucleotide sequence ID" value="NC_008751.1"/>
</dbReference>
<dbReference type="SMR" id="A1VBE8"/>
<dbReference type="CAZy" id="GT28">
    <property type="family name" value="Glycosyltransferase Family 28"/>
</dbReference>
<dbReference type="KEGG" id="dvl:Dvul_0741"/>
<dbReference type="HOGENOM" id="CLU_037404_2_0_7"/>
<dbReference type="UniPathway" id="UPA00219"/>
<dbReference type="Proteomes" id="UP000009173">
    <property type="component" value="Chromosome"/>
</dbReference>
<dbReference type="GO" id="GO:0005886">
    <property type="term" value="C:plasma membrane"/>
    <property type="evidence" value="ECO:0007669"/>
    <property type="project" value="UniProtKB-SubCell"/>
</dbReference>
<dbReference type="GO" id="GO:0051991">
    <property type="term" value="F:UDP-N-acetyl-D-glucosamine:N-acetylmuramoyl-L-alanyl-D-glutamyl-meso-2,6-diaminopimelyl-D-alanyl-D-alanine-diphosphoundecaprenol 4-beta-N-acetylglucosaminlytransferase activity"/>
    <property type="evidence" value="ECO:0007669"/>
    <property type="project" value="RHEA"/>
</dbReference>
<dbReference type="GO" id="GO:0050511">
    <property type="term" value="F:undecaprenyldiphospho-muramoylpentapeptide beta-N-acetylglucosaminyltransferase activity"/>
    <property type="evidence" value="ECO:0007669"/>
    <property type="project" value="UniProtKB-UniRule"/>
</dbReference>
<dbReference type="GO" id="GO:0005975">
    <property type="term" value="P:carbohydrate metabolic process"/>
    <property type="evidence" value="ECO:0007669"/>
    <property type="project" value="InterPro"/>
</dbReference>
<dbReference type="GO" id="GO:0051301">
    <property type="term" value="P:cell division"/>
    <property type="evidence" value="ECO:0007669"/>
    <property type="project" value="UniProtKB-KW"/>
</dbReference>
<dbReference type="GO" id="GO:0071555">
    <property type="term" value="P:cell wall organization"/>
    <property type="evidence" value="ECO:0007669"/>
    <property type="project" value="UniProtKB-KW"/>
</dbReference>
<dbReference type="GO" id="GO:0030259">
    <property type="term" value="P:lipid glycosylation"/>
    <property type="evidence" value="ECO:0007669"/>
    <property type="project" value="UniProtKB-UniRule"/>
</dbReference>
<dbReference type="GO" id="GO:0009252">
    <property type="term" value="P:peptidoglycan biosynthetic process"/>
    <property type="evidence" value="ECO:0007669"/>
    <property type="project" value="UniProtKB-UniRule"/>
</dbReference>
<dbReference type="GO" id="GO:0008360">
    <property type="term" value="P:regulation of cell shape"/>
    <property type="evidence" value="ECO:0007669"/>
    <property type="project" value="UniProtKB-KW"/>
</dbReference>
<dbReference type="CDD" id="cd03785">
    <property type="entry name" value="GT28_MurG"/>
    <property type="match status" value="1"/>
</dbReference>
<dbReference type="Gene3D" id="3.40.50.2000">
    <property type="entry name" value="Glycogen Phosphorylase B"/>
    <property type="match status" value="2"/>
</dbReference>
<dbReference type="HAMAP" id="MF_00033">
    <property type="entry name" value="MurG"/>
    <property type="match status" value="1"/>
</dbReference>
<dbReference type="InterPro" id="IPR006009">
    <property type="entry name" value="GlcNAc_MurG"/>
</dbReference>
<dbReference type="InterPro" id="IPR007235">
    <property type="entry name" value="Glyco_trans_28_C"/>
</dbReference>
<dbReference type="InterPro" id="IPR004276">
    <property type="entry name" value="GlycoTrans_28_N"/>
</dbReference>
<dbReference type="NCBIfam" id="TIGR01133">
    <property type="entry name" value="murG"/>
    <property type="match status" value="1"/>
</dbReference>
<dbReference type="PANTHER" id="PTHR21015:SF22">
    <property type="entry name" value="GLYCOSYLTRANSFERASE"/>
    <property type="match status" value="1"/>
</dbReference>
<dbReference type="PANTHER" id="PTHR21015">
    <property type="entry name" value="UDP-N-ACETYLGLUCOSAMINE--N-ACETYLMURAMYL-(PENTAPEPTIDE) PYROPHOSPHORYL-UNDECAPRENOL N-ACETYLGLUCOSAMINE TRANSFERASE 1"/>
    <property type="match status" value="1"/>
</dbReference>
<dbReference type="Pfam" id="PF04101">
    <property type="entry name" value="Glyco_tran_28_C"/>
    <property type="match status" value="1"/>
</dbReference>
<dbReference type="Pfam" id="PF03033">
    <property type="entry name" value="Glyco_transf_28"/>
    <property type="match status" value="1"/>
</dbReference>
<dbReference type="SUPFAM" id="SSF53756">
    <property type="entry name" value="UDP-Glycosyltransferase/glycogen phosphorylase"/>
    <property type="match status" value="1"/>
</dbReference>
<evidence type="ECO:0000255" key="1">
    <source>
        <dbReference type="HAMAP-Rule" id="MF_00033"/>
    </source>
</evidence>
<name>MURG_NITV4</name>
<keyword id="KW-0131">Cell cycle</keyword>
<keyword id="KW-0132">Cell division</keyword>
<keyword id="KW-0997">Cell inner membrane</keyword>
<keyword id="KW-1003">Cell membrane</keyword>
<keyword id="KW-0133">Cell shape</keyword>
<keyword id="KW-0961">Cell wall biogenesis/degradation</keyword>
<keyword id="KW-0328">Glycosyltransferase</keyword>
<keyword id="KW-0472">Membrane</keyword>
<keyword id="KW-0573">Peptidoglycan synthesis</keyword>
<keyword id="KW-0808">Transferase</keyword>
<organism>
    <name type="scientific">Nitratidesulfovibrio vulgaris (strain DP4)</name>
    <name type="common">Desulfovibrio vulgaris</name>
    <dbReference type="NCBI Taxonomy" id="391774"/>
    <lineage>
        <taxon>Bacteria</taxon>
        <taxon>Pseudomonadati</taxon>
        <taxon>Thermodesulfobacteriota</taxon>
        <taxon>Desulfovibrionia</taxon>
        <taxon>Desulfovibrionales</taxon>
        <taxon>Desulfovibrionaceae</taxon>
        <taxon>Nitratidesulfovibrio</taxon>
    </lineage>
</organism>
<proteinExistence type="inferred from homology"/>